<protein>
    <recommendedName>
        <fullName>Influenza virus NS1A-binding protein homolog</fullName>
        <shortName>NS1-BP</shortName>
        <shortName>NS1-binding protein homolog</shortName>
    </recommendedName>
</protein>
<evidence type="ECO:0000250" key="1"/>
<evidence type="ECO:0000250" key="2">
    <source>
        <dbReference type="UniProtKB" id="Q920Q8"/>
    </source>
</evidence>
<evidence type="ECO:0000255" key="3">
    <source>
        <dbReference type="PROSITE-ProRule" id="PRU00037"/>
    </source>
</evidence>
<evidence type="ECO:0000256" key="4">
    <source>
        <dbReference type="SAM" id="MobiDB-lite"/>
    </source>
</evidence>
<sequence>MIPNGSLNFEDEQFIESSVAKLNALRKSGQFCDVKLQVCGHEMLAHRAVLACCSPFLFEIFNSDSESNGISLVRFDDLNPEAVEVLLNYAYTSQLKAETDLVKDVYSAAKKLKIDRVKQVCGDYLISKIDAQSGISCRNFVNTMGDWRLLTKIDNYIQEHLLEISEQDDFLKLPRLNLEIMLEENVSLPSNGKLYTKVINWVQRSIWENGENLDALMEEVQTLYYSADHKLLDGSSLGEHTEAHEDNIQLIQKKSPRENNHKNLISSSSGSLSPSALIQCPKHEWKIIASEKKTNNTYLCLAVLNSTLCVIFLHGRNSPVNSPSSTPRLTKSLSLEIQPEDSLERVMSPMHYARSGLGTAELNGKLIAAGGYNREECLRTVECYDLETDIWTFIAPMKTPRARFQMAVLMDHLYVVGGSNGHSDDLSCGEKYDPKSNIWTPVPELRSNRCNAGVCALNGNLYVVGGSDPYGQKGLKNCDVFNPITRMWTCCAQLNIRRHQPAVCELGNKIYIIGGAESWNCLNSVECYNPQNDTWTLVAPMNVARRGSGVAVYDGKLLVVGGFDGTHALCCVESYNPERNEWKMVGSMTSSRSNAGVVAVGNQIYAAGGFDGNEFLNTVEVYNPQTDEWSPFTQLCES</sequence>
<name>NS1BP_XENLA</name>
<proteinExistence type="evidence at transcript level"/>
<comment type="function">
    <text evidence="2">Plays a role in cell division and in the dynamic organization of the actin skeleton as a stabilizer of actin filaments by association with F-actin through Kelch repeats.</text>
</comment>
<comment type="subcellular location">
    <subcellularLocation>
        <location>Cytoplasm</location>
    </subcellularLocation>
    <subcellularLocation>
        <location>Cytoplasm</location>
        <location>Cytoskeleton</location>
    </subcellularLocation>
    <subcellularLocation>
        <location>Nucleus</location>
    </subcellularLocation>
    <text evidence="1">Associated with actin filaments.</text>
</comment>
<feature type="chain" id="PRO_0000285081" description="Influenza virus NS1A-binding protein homolog">
    <location>
        <begin position="1"/>
        <end position="638"/>
    </location>
</feature>
<feature type="domain" description="BTB" evidence="3">
    <location>
        <begin position="32"/>
        <end position="99"/>
    </location>
</feature>
<feature type="domain" description="BACK">
    <location>
        <begin position="134"/>
        <end position="233"/>
    </location>
</feature>
<feature type="repeat" description="Kelch 1">
    <location>
        <begin position="365"/>
        <end position="411"/>
    </location>
</feature>
<feature type="repeat" description="Kelch 2">
    <location>
        <begin position="412"/>
        <end position="459"/>
    </location>
</feature>
<feature type="repeat" description="Kelch 3">
    <location>
        <begin position="461"/>
        <end position="508"/>
    </location>
</feature>
<feature type="repeat" description="Kelch 4">
    <location>
        <begin position="509"/>
        <end position="555"/>
    </location>
</feature>
<feature type="repeat" description="Kelch 5">
    <location>
        <begin position="557"/>
        <end position="602"/>
    </location>
</feature>
<feature type="repeat" description="Kelch 6">
    <location>
        <begin position="604"/>
        <end position="638"/>
    </location>
</feature>
<feature type="region of interest" description="Disordered" evidence="4">
    <location>
        <begin position="251"/>
        <end position="273"/>
    </location>
</feature>
<dbReference type="EMBL" id="BC076641">
    <property type="protein sequence ID" value="AAH76641.1"/>
    <property type="molecule type" value="mRNA"/>
</dbReference>
<dbReference type="RefSeq" id="NP_001086493.1">
    <property type="nucleotide sequence ID" value="NM_001093024.1"/>
</dbReference>
<dbReference type="SMR" id="Q6DFU2"/>
<dbReference type="DNASU" id="446327"/>
<dbReference type="GeneID" id="446327"/>
<dbReference type="KEGG" id="xla:446327"/>
<dbReference type="AGR" id="Xenbase:XB-GENE-949337"/>
<dbReference type="CTD" id="446327"/>
<dbReference type="Xenbase" id="XB-GENE-949337">
    <property type="gene designation" value="ivns1abp.L"/>
</dbReference>
<dbReference type="OrthoDB" id="45365at2759"/>
<dbReference type="Proteomes" id="UP000186698">
    <property type="component" value="Chromosome 4L"/>
</dbReference>
<dbReference type="Bgee" id="446327">
    <property type="expression patterns" value="Expressed in egg cell and 19 other cell types or tissues"/>
</dbReference>
<dbReference type="GO" id="GO:0031463">
    <property type="term" value="C:Cul3-RING ubiquitin ligase complex"/>
    <property type="evidence" value="ECO:0000318"/>
    <property type="project" value="GO_Central"/>
</dbReference>
<dbReference type="GO" id="GO:0005737">
    <property type="term" value="C:cytoplasm"/>
    <property type="evidence" value="ECO:0000318"/>
    <property type="project" value="GO_Central"/>
</dbReference>
<dbReference type="GO" id="GO:0005856">
    <property type="term" value="C:cytoskeleton"/>
    <property type="evidence" value="ECO:0007669"/>
    <property type="project" value="UniProtKB-SubCell"/>
</dbReference>
<dbReference type="GO" id="GO:0005634">
    <property type="term" value="C:nucleus"/>
    <property type="evidence" value="ECO:0007669"/>
    <property type="project" value="UniProtKB-SubCell"/>
</dbReference>
<dbReference type="GO" id="GO:1990756">
    <property type="term" value="F:ubiquitin-like ligase-substrate adaptor activity"/>
    <property type="evidence" value="ECO:0000318"/>
    <property type="project" value="GO_Central"/>
</dbReference>
<dbReference type="GO" id="GO:0043161">
    <property type="term" value="P:proteasome-mediated ubiquitin-dependent protein catabolic process"/>
    <property type="evidence" value="ECO:0000318"/>
    <property type="project" value="GO_Central"/>
</dbReference>
<dbReference type="CDD" id="cd18502">
    <property type="entry name" value="BACK_NS1BP_IVNS1ABP"/>
    <property type="match status" value="1"/>
</dbReference>
<dbReference type="CDD" id="cd18306">
    <property type="entry name" value="BTB_POZ_NS1BP"/>
    <property type="match status" value="1"/>
</dbReference>
<dbReference type="Gene3D" id="1.25.40.420">
    <property type="match status" value="1"/>
</dbReference>
<dbReference type="Gene3D" id="2.120.10.80">
    <property type="entry name" value="Kelch-type beta propeller"/>
    <property type="match status" value="2"/>
</dbReference>
<dbReference type="Gene3D" id="3.30.710.10">
    <property type="entry name" value="Potassium Channel Kv1.1, Chain A"/>
    <property type="match status" value="1"/>
</dbReference>
<dbReference type="InterPro" id="IPR011705">
    <property type="entry name" value="BACK"/>
</dbReference>
<dbReference type="InterPro" id="IPR017096">
    <property type="entry name" value="BTB-kelch_protein"/>
</dbReference>
<dbReference type="InterPro" id="IPR000210">
    <property type="entry name" value="BTB/POZ_dom"/>
</dbReference>
<dbReference type="InterPro" id="IPR015915">
    <property type="entry name" value="Kelch-typ_b-propeller"/>
</dbReference>
<dbReference type="InterPro" id="IPR006652">
    <property type="entry name" value="Kelch_1"/>
</dbReference>
<dbReference type="InterPro" id="IPR011333">
    <property type="entry name" value="SKP1/BTB/POZ_sf"/>
</dbReference>
<dbReference type="PANTHER" id="PTHR45632:SF26">
    <property type="entry name" value="BTB DOMAIN-CONTAINING PROTEIN"/>
    <property type="match status" value="1"/>
</dbReference>
<dbReference type="PANTHER" id="PTHR45632">
    <property type="entry name" value="LD33804P"/>
    <property type="match status" value="1"/>
</dbReference>
<dbReference type="Pfam" id="PF07707">
    <property type="entry name" value="BACK"/>
    <property type="match status" value="1"/>
</dbReference>
<dbReference type="Pfam" id="PF00651">
    <property type="entry name" value="BTB"/>
    <property type="match status" value="1"/>
</dbReference>
<dbReference type="Pfam" id="PF01344">
    <property type="entry name" value="Kelch_1"/>
    <property type="match status" value="1"/>
</dbReference>
<dbReference type="Pfam" id="PF24681">
    <property type="entry name" value="Kelch_KLHDC2_KLHL20_DRC7"/>
    <property type="match status" value="1"/>
</dbReference>
<dbReference type="PIRSF" id="PIRSF037037">
    <property type="entry name" value="Kelch-like_protein_gigaxonin"/>
    <property type="match status" value="1"/>
</dbReference>
<dbReference type="SMART" id="SM00225">
    <property type="entry name" value="BTB"/>
    <property type="match status" value="1"/>
</dbReference>
<dbReference type="SMART" id="SM00612">
    <property type="entry name" value="Kelch"/>
    <property type="match status" value="6"/>
</dbReference>
<dbReference type="SUPFAM" id="SSF117281">
    <property type="entry name" value="Kelch motif"/>
    <property type="match status" value="2"/>
</dbReference>
<dbReference type="SUPFAM" id="SSF54695">
    <property type="entry name" value="POZ domain"/>
    <property type="match status" value="1"/>
</dbReference>
<dbReference type="PROSITE" id="PS50097">
    <property type="entry name" value="BTB"/>
    <property type="match status" value="1"/>
</dbReference>
<gene>
    <name type="primary">ivns1abp</name>
</gene>
<reference key="1">
    <citation type="submission" date="2004-07" db="EMBL/GenBank/DDBJ databases">
        <authorList>
            <consortium name="NIH - Xenopus Gene Collection (XGC) project"/>
        </authorList>
    </citation>
    <scope>NUCLEOTIDE SEQUENCE [LARGE SCALE MRNA]</scope>
    <source>
        <tissue>Embryo</tissue>
    </source>
</reference>
<keyword id="KW-0963">Cytoplasm</keyword>
<keyword id="KW-0206">Cytoskeleton</keyword>
<keyword id="KW-0880">Kelch repeat</keyword>
<keyword id="KW-0539">Nucleus</keyword>
<keyword id="KW-1185">Reference proteome</keyword>
<keyword id="KW-0677">Repeat</keyword>
<accession>Q6DFU2</accession>
<organism>
    <name type="scientific">Xenopus laevis</name>
    <name type="common">African clawed frog</name>
    <dbReference type="NCBI Taxonomy" id="8355"/>
    <lineage>
        <taxon>Eukaryota</taxon>
        <taxon>Metazoa</taxon>
        <taxon>Chordata</taxon>
        <taxon>Craniata</taxon>
        <taxon>Vertebrata</taxon>
        <taxon>Euteleostomi</taxon>
        <taxon>Amphibia</taxon>
        <taxon>Batrachia</taxon>
        <taxon>Anura</taxon>
        <taxon>Pipoidea</taxon>
        <taxon>Pipidae</taxon>
        <taxon>Xenopodinae</taxon>
        <taxon>Xenopus</taxon>
        <taxon>Xenopus</taxon>
    </lineage>
</organism>